<sequence>MQPETSDQMLYSFLAGNEVGGGGYCVSGDYMTTMQSLCGSSSSTSSYYPLAISGIGETMAQDRALAALRNHKEAERRRRERINSHLNKLRNVLSCNSKTDKATLLAKVVQRVRELKQQTLETSDSDQTLLPSETDEISVLHFGDYSNDGHIIFKASLCCEDRSDLLPDLMEILKSLNMKTLRAEMVTIGGRTRSVLVVAADKEMHGVESVHFLQNALKSLLERSSKSLMERSSGGGGGERSKRRRALDHIIMV</sequence>
<gene>
    <name type="primary">BHLH106</name>
    <name type="synonym">EN56</name>
    <name type="ordered locus">At2g41130</name>
    <name type="ORF">T3K9.10</name>
</gene>
<feature type="chain" id="PRO_0000358793" description="Transcription factor bHLH106">
    <location>
        <begin position="1"/>
        <end position="253"/>
    </location>
</feature>
<feature type="domain" description="bHLH" evidence="1">
    <location>
        <begin position="66"/>
        <end position="115"/>
    </location>
</feature>
<protein>
    <recommendedName>
        <fullName>Transcription factor bHLH106</fullName>
    </recommendedName>
    <alternativeName>
        <fullName>Basic helix-loop-helix protein 106</fullName>
        <shortName>AtbHLH106</shortName>
        <shortName>bHLH 106</shortName>
    </alternativeName>
    <alternativeName>
        <fullName>Transcription factor EN 56</fullName>
    </alternativeName>
    <alternativeName>
        <fullName>bHLH transcription factor bHLH106</fullName>
    </alternativeName>
</protein>
<name>BH106_ARATH</name>
<organism>
    <name type="scientific">Arabidopsis thaliana</name>
    <name type="common">Mouse-ear cress</name>
    <dbReference type="NCBI Taxonomy" id="3702"/>
    <lineage>
        <taxon>Eukaryota</taxon>
        <taxon>Viridiplantae</taxon>
        <taxon>Streptophyta</taxon>
        <taxon>Embryophyta</taxon>
        <taxon>Tracheophyta</taxon>
        <taxon>Spermatophyta</taxon>
        <taxon>Magnoliopsida</taxon>
        <taxon>eudicotyledons</taxon>
        <taxon>Gunneridae</taxon>
        <taxon>Pentapetalae</taxon>
        <taxon>rosids</taxon>
        <taxon>malvids</taxon>
        <taxon>Brassicales</taxon>
        <taxon>Brassicaceae</taxon>
        <taxon>Camelineae</taxon>
        <taxon>Arabidopsis</taxon>
    </lineage>
</organism>
<reference key="1">
    <citation type="journal article" date="1999" name="Nature">
        <title>Sequence and analysis of chromosome 2 of the plant Arabidopsis thaliana.</title>
        <authorList>
            <person name="Lin X."/>
            <person name="Kaul S."/>
            <person name="Rounsley S.D."/>
            <person name="Shea T.P."/>
            <person name="Benito M.-I."/>
            <person name="Town C.D."/>
            <person name="Fujii C.Y."/>
            <person name="Mason T.M."/>
            <person name="Bowman C.L."/>
            <person name="Barnstead M.E."/>
            <person name="Feldblyum T.V."/>
            <person name="Buell C.R."/>
            <person name="Ketchum K.A."/>
            <person name="Lee J.J."/>
            <person name="Ronning C.M."/>
            <person name="Koo H.L."/>
            <person name="Moffat K.S."/>
            <person name="Cronin L.A."/>
            <person name="Shen M."/>
            <person name="Pai G."/>
            <person name="Van Aken S."/>
            <person name="Umayam L."/>
            <person name="Tallon L.J."/>
            <person name="Gill J.E."/>
            <person name="Adams M.D."/>
            <person name="Carrera A.J."/>
            <person name="Creasy T.H."/>
            <person name="Goodman H.M."/>
            <person name="Somerville C.R."/>
            <person name="Copenhaver G.P."/>
            <person name="Preuss D."/>
            <person name="Nierman W.C."/>
            <person name="White O."/>
            <person name="Eisen J.A."/>
            <person name="Salzberg S.L."/>
            <person name="Fraser C.M."/>
            <person name="Venter J.C."/>
        </authorList>
    </citation>
    <scope>NUCLEOTIDE SEQUENCE [LARGE SCALE GENOMIC DNA]</scope>
    <source>
        <strain>cv. Columbia</strain>
    </source>
</reference>
<reference key="2">
    <citation type="journal article" date="2017" name="Plant J.">
        <title>Araport11: a complete reannotation of the Arabidopsis thaliana reference genome.</title>
        <authorList>
            <person name="Cheng C.Y."/>
            <person name="Krishnakumar V."/>
            <person name="Chan A.P."/>
            <person name="Thibaud-Nissen F."/>
            <person name="Schobel S."/>
            <person name="Town C.D."/>
        </authorList>
    </citation>
    <scope>GENOME REANNOTATION</scope>
    <source>
        <strain>cv. Columbia</strain>
    </source>
</reference>
<reference key="3">
    <citation type="journal article" date="2002" name="Science">
        <title>Functional annotation of a full-length Arabidopsis cDNA collection.</title>
        <authorList>
            <person name="Seki M."/>
            <person name="Narusaka M."/>
            <person name="Kamiya A."/>
            <person name="Ishida J."/>
            <person name="Satou M."/>
            <person name="Sakurai T."/>
            <person name="Nakajima M."/>
            <person name="Enju A."/>
            <person name="Akiyama K."/>
            <person name="Oono Y."/>
            <person name="Muramatsu M."/>
            <person name="Hayashizaki Y."/>
            <person name="Kawai J."/>
            <person name="Carninci P."/>
            <person name="Itoh M."/>
            <person name="Ishii Y."/>
            <person name="Arakawa T."/>
            <person name="Shibata K."/>
            <person name="Shinagawa A."/>
            <person name="Shinozaki K."/>
        </authorList>
    </citation>
    <scope>NUCLEOTIDE SEQUENCE [LARGE SCALE MRNA]</scope>
    <source>
        <strain>cv. Columbia</strain>
    </source>
</reference>
<reference key="4">
    <citation type="journal article" date="2003" name="Science">
        <title>Empirical analysis of transcriptional activity in the Arabidopsis genome.</title>
        <authorList>
            <person name="Yamada K."/>
            <person name="Lim J."/>
            <person name="Dale J.M."/>
            <person name="Chen H."/>
            <person name="Shinn P."/>
            <person name="Palm C.J."/>
            <person name="Southwick A.M."/>
            <person name="Wu H.C."/>
            <person name="Kim C.J."/>
            <person name="Nguyen M."/>
            <person name="Pham P.K."/>
            <person name="Cheuk R.F."/>
            <person name="Karlin-Newmann G."/>
            <person name="Liu S.X."/>
            <person name="Lam B."/>
            <person name="Sakano H."/>
            <person name="Wu T."/>
            <person name="Yu G."/>
            <person name="Miranda M."/>
            <person name="Quach H.L."/>
            <person name="Tripp M."/>
            <person name="Chang C.H."/>
            <person name="Lee J.M."/>
            <person name="Toriumi M.J."/>
            <person name="Chan M.M."/>
            <person name="Tang C.C."/>
            <person name="Onodera C.S."/>
            <person name="Deng J.M."/>
            <person name="Akiyama K."/>
            <person name="Ansari Y."/>
            <person name="Arakawa T."/>
            <person name="Banh J."/>
            <person name="Banno F."/>
            <person name="Bowser L."/>
            <person name="Brooks S.Y."/>
            <person name="Carninci P."/>
            <person name="Chao Q."/>
            <person name="Choy N."/>
            <person name="Enju A."/>
            <person name="Goldsmith A.D."/>
            <person name="Gurjal M."/>
            <person name="Hansen N.F."/>
            <person name="Hayashizaki Y."/>
            <person name="Johnson-Hopson C."/>
            <person name="Hsuan V.W."/>
            <person name="Iida K."/>
            <person name="Karnes M."/>
            <person name="Khan S."/>
            <person name="Koesema E."/>
            <person name="Ishida J."/>
            <person name="Jiang P.X."/>
            <person name="Jones T."/>
            <person name="Kawai J."/>
            <person name="Kamiya A."/>
            <person name="Meyers C."/>
            <person name="Nakajima M."/>
            <person name="Narusaka M."/>
            <person name="Seki M."/>
            <person name="Sakurai T."/>
            <person name="Satou M."/>
            <person name="Tamse R."/>
            <person name="Vaysberg M."/>
            <person name="Wallender E.K."/>
            <person name="Wong C."/>
            <person name="Yamamura Y."/>
            <person name="Yuan S."/>
            <person name="Shinozaki K."/>
            <person name="Davis R.W."/>
            <person name="Theologis A."/>
            <person name="Ecker J.R."/>
        </authorList>
    </citation>
    <scope>NUCLEOTIDE SEQUENCE [LARGE SCALE MRNA] OF 2-253</scope>
    <source>
        <strain>cv. Columbia</strain>
    </source>
</reference>
<reference key="5">
    <citation type="journal article" date="2003" name="Mol. Biol. Evol.">
        <title>The basic helix-loop-helix transcription factor family in plants: a genome-wide study of protein structure and functional diversity.</title>
        <authorList>
            <person name="Heim M.A."/>
            <person name="Jakoby M."/>
            <person name="Werber M."/>
            <person name="Martin C."/>
            <person name="Weisshaar B."/>
            <person name="Bailey P.C."/>
        </authorList>
    </citation>
    <scope>GENE FAMILY</scope>
    <scope>NOMENCLATURE</scope>
</reference>
<reference key="6">
    <citation type="journal article" date="2003" name="Plant Cell">
        <title>The Arabidopsis basic/helix-loop-helix transcription factor family.</title>
        <authorList>
            <person name="Toledo-Ortiz G."/>
            <person name="Huq E."/>
            <person name="Quail P.H."/>
        </authorList>
    </citation>
    <scope>GENE FAMILY</scope>
</reference>
<reference key="7">
    <citation type="journal article" date="2003" name="Plant Cell">
        <title>Update on the basic helix-loop-helix transcription factor gene family in Arabidopsis thaliana.</title>
        <authorList>
            <person name="Bailey P.C."/>
            <person name="Martin C."/>
            <person name="Toledo-Ortiz G."/>
            <person name="Quail P.H."/>
            <person name="Huq E."/>
            <person name="Heim M.A."/>
            <person name="Jakoby M."/>
            <person name="Werber M."/>
            <person name="Weisshaar B."/>
        </authorList>
    </citation>
    <scope>GENE FAMILY</scope>
    <scope>NOMENCLATURE</scope>
</reference>
<dbReference type="EMBL" id="AC004261">
    <property type="protein sequence ID" value="AAD11998.1"/>
    <property type="molecule type" value="Genomic_DNA"/>
</dbReference>
<dbReference type="EMBL" id="CP002685">
    <property type="protein sequence ID" value="AEC09935.1"/>
    <property type="molecule type" value="Genomic_DNA"/>
</dbReference>
<dbReference type="EMBL" id="AK119059">
    <property type="protein sequence ID" value="BAC43635.1"/>
    <property type="molecule type" value="mRNA"/>
</dbReference>
<dbReference type="EMBL" id="AY074639">
    <property type="protein sequence ID" value="AAL69455.1"/>
    <property type="molecule type" value="mRNA"/>
</dbReference>
<dbReference type="PIR" id="T02106">
    <property type="entry name" value="T02106"/>
</dbReference>
<dbReference type="RefSeq" id="NP_181646.1">
    <property type="nucleotide sequence ID" value="NM_129678.3"/>
</dbReference>
<dbReference type="SMR" id="O80674"/>
<dbReference type="BioGRID" id="4049">
    <property type="interactions" value="7"/>
</dbReference>
<dbReference type="FunCoup" id="O80674">
    <property type="interactions" value="147"/>
</dbReference>
<dbReference type="IntAct" id="O80674">
    <property type="interactions" value="5"/>
</dbReference>
<dbReference type="STRING" id="3702.O80674"/>
<dbReference type="PaxDb" id="3702-AT2G41130.1"/>
<dbReference type="EnsemblPlants" id="AT2G41130.1">
    <property type="protein sequence ID" value="AT2G41130.1"/>
    <property type="gene ID" value="AT2G41130"/>
</dbReference>
<dbReference type="GeneID" id="818712"/>
<dbReference type="Gramene" id="AT2G41130.1">
    <property type="protein sequence ID" value="AT2G41130.1"/>
    <property type="gene ID" value="AT2G41130"/>
</dbReference>
<dbReference type="KEGG" id="ath:AT2G41130"/>
<dbReference type="Araport" id="AT2G41130"/>
<dbReference type="TAIR" id="AT2G41130">
    <property type="gene designation" value="BHLH106"/>
</dbReference>
<dbReference type="eggNOG" id="KOG3561">
    <property type="taxonomic scope" value="Eukaryota"/>
</dbReference>
<dbReference type="HOGENOM" id="CLU_063967_1_0_1"/>
<dbReference type="InParanoid" id="O80674"/>
<dbReference type="OMA" id="YSFLAGN"/>
<dbReference type="OrthoDB" id="71302at2759"/>
<dbReference type="PhylomeDB" id="O80674"/>
<dbReference type="PRO" id="PR:O80674"/>
<dbReference type="Proteomes" id="UP000006548">
    <property type="component" value="Chromosome 2"/>
</dbReference>
<dbReference type="ExpressionAtlas" id="O80674">
    <property type="expression patterns" value="baseline and differential"/>
</dbReference>
<dbReference type="GO" id="GO:0009941">
    <property type="term" value="C:chloroplast envelope"/>
    <property type="evidence" value="ECO:0007005"/>
    <property type="project" value="TAIR"/>
</dbReference>
<dbReference type="GO" id="GO:0005634">
    <property type="term" value="C:nucleus"/>
    <property type="evidence" value="ECO:0000314"/>
    <property type="project" value="TAIR"/>
</dbReference>
<dbReference type="GO" id="GO:0003677">
    <property type="term" value="F:DNA binding"/>
    <property type="evidence" value="ECO:0007669"/>
    <property type="project" value="UniProtKB-KW"/>
</dbReference>
<dbReference type="GO" id="GO:0003700">
    <property type="term" value="F:DNA-binding transcription factor activity"/>
    <property type="evidence" value="ECO:0000314"/>
    <property type="project" value="TAIR"/>
</dbReference>
<dbReference type="GO" id="GO:0046983">
    <property type="term" value="F:protein dimerization activity"/>
    <property type="evidence" value="ECO:0007669"/>
    <property type="project" value="InterPro"/>
</dbReference>
<dbReference type="GO" id="GO:0042538">
    <property type="term" value="P:hyperosmotic salinity response"/>
    <property type="evidence" value="ECO:0000315"/>
    <property type="project" value="TAIR"/>
</dbReference>
<dbReference type="GO" id="GO:0006355">
    <property type="term" value="P:regulation of DNA-templated transcription"/>
    <property type="evidence" value="ECO:0000304"/>
    <property type="project" value="TAIR"/>
</dbReference>
<dbReference type="FunFam" id="4.10.280.10:FF:000070">
    <property type="entry name" value="transcription factor bHLH30"/>
    <property type="match status" value="1"/>
</dbReference>
<dbReference type="Gene3D" id="4.10.280.10">
    <property type="entry name" value="Helix-loop-helix DNA-binding domain"/>
    <property type="match status" value="1"/>
</dbReference>
<dbReference type="InterPro" id="IPR045847">
    <property type="entry name" value="AIG1-like"/>
</dbReference>
<dbReference type="InterPro" id="IPR011598">
    <property type="entry name" value="bHLH_dom"/>
</dbReference>
<dbReference type="InterPro" id="IPR036638">
    <property type="entry name" value="HLH_DNA-bd_sf"/>
</dbReference>
<dbReference type="PANTHER" id="PTHR45844:SF19">
    <property type="entry name" value="TRANSCRIPTION FACTOR BHLH106-RELATED"/>
    <property type="match status" value="1"/>
</dbReference>
<dbReference type="PANTHER" id="PTHR45844">
    <property type="entry name" value="TRANSCRIPTION FACTOR BHLH30"/>
    <property type="match status" value="1"/>
</dbReference>
<dbReference type="Pfam" id="PF00010">
    <property type="entry name" value="HLH"/>
    <property type="match status" value="1"/>
</dbReference>
<dbReference type="SMART" id="SM00353">
    <property type="entry name" value="HLH"/>
    <property type="match status" value="1"/>
</dbReference>
<dbReference type="SUPFAM" id="SSF47459">
    <property type="entry name" value="HLH, helix-loop-helix DNA-binding domain"/>
    <property type="match status" value="1"/>
</dbReference>
<dbReference type="PROSITE" id="PS50888">
    <property type="entry name" value="BHLH"/>
    <property type="match status" value="1"/>
</dbReference>
<accession>O80674</accession>
<accession>Q8S9M5</accession>
<proteinExistence type="evidence at transcript level"/>
<comment type="subunit">
    <text evidence="2">Homodimer.</text>
</comment>
<comment type="subcellular location">
    <subcellularLocation>
        <location evidence="1">Nucleus</location>
    </subcellularLocation>
</comment>
<evidence type="ECO:0000255" key="1">
    <source>
        <dbReference type="PROSITE-ProRule" id="PRU00981"/>
    </source>
</evidence>
<evidence type="ECO:0000305" key="2"/>
<keyword id="KW-0238">DNA-binding</keyword>
<keyword id="KW-0539">Nucleus</keyword>
<keyword id="KW-1185">Reference proteome</keyword>
<keyword id="KW-0804">Transcription</keyword>
<keyword id="KW-0805">Transcription regulation</keyword>